<feature type="signal peptide" evidence="2">
    <location>
        <begin position="1"/>
        <end position="20"/>
    </location>
</feature>
<feature type="chain" id="PRO_0000017797" description="Endothelial lipase">
    <location>
        <begin position="21"/>
        <end position="500"/>
    </location>
</feature>
<feature type="domain" description="PLAT" evidence="3">
    <location>
        <begin position="347"/>
        <end position="482"/>
    </location>
</feature>
<feature type="active site" description="Nucleophile" evidence="1">
    <location>
        <position position="169"/>
    </location>
</feature>
<feature type="active site" description="Charge relay system" evidence="4">
    <location>
        <position position="193"/>
    </location>
</feature>
<feature type="active site" description="Charge relay system" evidence="4">
    <location>
        <position position="274"/>
    </location>
</feature>
<feature type="binding site" evidence="1">
    <location>
        <begin position="325"/>
        <end position="337"/>
    </location>
    <ligand>
        <name>heparin</name>
        <dbReference type="ChEBI" id="CHEBI:28304"/>
    </ligand>
</feature>
<feature type="glycosylation site" description="N-linked (GlcNAc...) asparagine" evidence="2">
    <location>
        <position position="80"/>
    </location>
</feature>
<feature type="glycosylation site" description="N-linked (GlcNAc...) asparagine" evidence="2">
    <location>
        <position position="136"/>
    </location>
</feature>
<feature type="glycosylation site" description="N-linked (GlcNAc...) asparagine" evidence="9">
    <location>
        <position position="393"/>
    </location>
</feature>
<feature type="glycosylation site" description="N-linked (GlcNAc...) asparagine" evidence="2">
    <location>
        <position position="469"/>
    </location>
</feature>
<feature type="glycosylation site" description="N-linked (GlcNAc...) asparagine" evidence="2">
    <location>
        <position position="491"/>
    </location>
</feature>
<feature type="disulfide bond" evidence="3">
    <location>
        <begin position="64"/>
        <end position="77"/>
    </location>
</feature>
<feature type="disulfide bond" evidence="3">
    <location>
        <begin position="252"/>
        <end position="272"/>
    </location>
</feature>
<feature type="disulfide bond" evidence="3">
    <location>
        <begin position="297"/>
        <end position="316"/>
    </location>
</feature>
<feature type="disulfide bond" evidence="3">
    <location>
        <begin position="308"/>
        <end position="311"/>
    </location>
</feature>
<feature type="disulfide bond" evidence="3">
    <location>
        <begin position="463"/>
        <end position="483"/>
    </location>
</feature>
<feature type="splice variant" id="VSP_013302" description="In isoform 2." evidence="11">
    <original>VYHYQMKIH</original>
    <variation>GNLQSLECP</variation>
    <location>
        <begin position="346"/>
        <end position="354"/>
    </location>
</feature>
<feature type="splice variant" id="VSP_013303" description="In isoform 2." evidence="11">
    <location>
        <begin position="355"/>
        <end position="500"/>
    </location>
</feature>
<feature type="sequence variant" id="VAR_034082" description="In dbSNP:rs9963243.">
    <original>G</original>
    <variation>S</variation>
    <location>
        <position position="26"/>
    </location>
</feature>
<feature type="sequence variant" id="VAR_017027" description="In dbSNP:rs150879681." evidence="8">
    <original>G</original>
    <variation>S</variation>
    <location>
        <position position="96"/>
    </location>
</feature>
<feature type="sequence variant" id="VAR_017028" description="In dbSNP:rs2000813." evidence="8">
    <original>T</original>
    <variation>I</variation>
    <location>
        <position position="111"/>
    </location>
</feature>
<feature type="sequence variant" id="VAR_017029" description="In dbSNP:rs982493840." evidence="8">
    <original>R</original>
    <variation>H</variation>
    <location>
        <position position="312"/>
    </location>
</feature>
<feature type="sequence conflict" description="In Ref. 6; AAH60825." evidence="12" ref="6">
    <original>R</original>
    <variation>Q</variation>
    <location>
        <position position="476"/>
    </location>
</feature>
<protein>
    <recommendedName>
        <fullName>Endothelial lipase</fullName>
        <ecNumber evidence="5 6 7">3.1.1.3</ecNumber>
    </recommendedName>
    <alternativeName>
        <fullName>Endothelial cell-derived lipase</fullName>
        <shortName>EDL</shortName>
        <shortName>EL</shortName>
    </alternativeName>
    <alternativeName>
        <fullName>Phospholipase A1</fullName>
        <ecNumber evidence="7">3.1.1.32</ecNumber>
    </alternativeName>
</protein>
<reference key="1">
    <citation type="journal article" date="1999" name="J. Biol. Chem.">
        <title>Cloning of a unique lipase from endothelial cells extends the lipase gene family.</title>
        <authorList>
            <person name="Hirata K."/>
            <person name="Dichek H.L."/>
            <person name="Cioffi J.A."/>
            <person name="Choi S.Y."/>
            <person name="Leeper N.J."/>
            <person name="Quintana L."/>
            <person name="Kronmal G.S."/>
            <person name="Cooper A.D."/>
            <person name="Quertermous T."/>
        </authorList>
    </citation>
    <scope>NUCLEOTIDE SEQUENCE [MRNA] (ISOFORM 1)</scope>
    <scope>FUNCTION</scope>
    <scope>CATALYTIC ACTIVITY</scope>
    <scope>SUBCELLULAR LOCATION</scope>
    <scope>TISSUE SPECIFICITY</scope>
    <source>
        <tissue>Endothelial cell</tissue>
    </source>
</reference>
<reference key="2">
    <citation type="journal article" date="1999" name="Nat. Genet.">
        <title>A novel endothelial-derived lipase that modulates HDL metabolism.</title>
        <authorList>
            <person name="Jaye M."/>
            <person name="Lynch K.J."/>
            <person name="Krawiec J."/>
            <person name="Marchadier D."/>
            <person name="Maugeais C."/>
            <person name="Doan K."/>
            <person name="South V."/>
            <person name="Amin D."/>
            <person name="Perrone M."/>
            <person name="Rader D.J."/>
        </authorList>
    </citation>
    <scope>NUCLEOTIDE SEQUENCE [MRNA] (ISOFORM 1)</scope>
    <scope>FUNCTION</scope>
    <scope>CATALYTIC ACTIVITY</scope>
    <scope>TISSUE SPECIFICITY</scope>
    <source>
        <tissue>Placenta</tissue>
    </source>
</reference>
<reference key="3">
    <citation type="journal article" date="2003" name="Genome Res.">
        <title>The secreted protein discovery initiative (SPDI), a large-scale effort to identify novel human secreted and transmembrane proteins: a bioinformatics assessment.</title>
        <authorList>
            <person name="Clark H.F."/>
            <person name="Gurney A.L."/>
            <person name="Abaya E."/>
            <person name="Baker K."/>
            <person name="Baldwin D.T."/>
            <person name="Brush J."/>
            <person name="Chen J."/>
            <person name="Chow B."/>
            <person name="Chui C."/>
            <person name="Crowley C."/>
            <person name="Currell B."/>
            <person name="Deuel B."/>
            <person name="Dowd P."/>
            <person name="Eaton D."/>
            <person name="Foster J.S."/>
            <person name="Grimaldi C."/>
            <person name="Gu Q."/>
            <person name="Hass P.E."/>
            <person name="Heldens S."/>
            <person name="Huang A."/>
            <person name="Kim H.S."/>
            <person name="Klimowski L."/>
            <person name="Jin Y."/>
            <person name="Johnson S."/>
            <person name="Lee J."/>
            <person name="Lewis L."/>
            <person name="Liao D."/>
            <person name="Mark M.R."/>
            <person name="Robbie E."/>
            <person name="Sanchez C."/>
            <person name="Schoenfeld J."/>
            <person name="Seshagiri S."/>
            <person name="Simmons L."/>
            <person name="Singh J."/>
            <person name="Smith V."/>
            <person name="Stinson J."/>
            <person name="Vagts A."/>
            <person name="Vandlen R.L."/>
            <person name="Watanabe C."/>
            <person name="Wieand D."/>
            <person name="Woods K."/>
            <person name="Xie M.-H."/>
            <person name="Yansura D.G."/>
            <person name="Yi S."/>
            <person name="Yu G."/>
            <person name="Yuan J."/>
            <person name="Zhang M."/>
            <person name="Zhang Z."/>
            <person name="Goddard A.D."/>
            <person name="Wood W.I."/>
            <person name="Godowski P.J."/>
            <person name="Gray A.M."/>
        </authorList>
    </citation>
    <scope>NUCLEOTIDE SEQUENCE [LARGE SCALE MRNA] (ISOFORM 2)</scope>
</reference>
<reference key="4">
    <citation type="submission" date="2007-12" db="EMBL/GenBank/DDBJ databases">
        <authorList>
            <consortium name="NHLBI resequencing and genotyping service (RS&amp;G)"/>
        </authorList>
    </citation>
    <scope>NUCLEOTIDE SEQUENCE [GENOMIC DNA]</scope>
</reference>
<reference key="5">
    <citation type="submission" date="2005-07" db="EMBL/GenBank/DDBJ databases">
        <authorList>
            <person name="Mural R.J."/>
            <person name="Istrail S."/>
            <person name="Sutton G.G."/>
            <person name="Florea L."/>
            <person name="Halpern A.L."/>
            <person name="Mobarry C.M."/>
            <person name="Lippert R."/>
            <person name="Walenz B."/>
            <person name="Shatkay H."/>
            <person name="Dew I."/>
            <person name="Miller J.R."/>
            <person name="Flanigan M.J."/>
            <person name="Edwards N.J."/>
            <person name="Bolanos R."/>
            <person name="Fasulo D."/>
            <person name="Halldorsson B.V."/>
            <person name="Hannenhalli S."/>
            <person name="Turner R."/>
            <person name="Yooseph S."/>
            <person name="Lu F."/>
            <person name="Nusskern D.R."/>
            <person name="Shue B.C."/>
            <person name="Zheng X.H."/>
            <person name="Zhong F."/>
            <person name="Delcher A.L."/>
            <person name="Huson D.H."/>
            <person name="Kravitz S.A."/>
            <person name="Mouchard L."/>
            <person name="Reinert K."/>
            <person name="Remington K.A."/>
            <person name="Clark A.G."/>
            <person name="Waterman M.S."/>
            <person name="Eichler E.E."/>
            <person name="Adams M.D."/>
            <person name="Hunkapiller M.W."/>
            <person name="Myers E.W."/>
            <person name="Venter J.C."/>
        </authorList>
    </citation>
    <scope>NUCLEOTIDE SEQUENCE [LARGE SCALE GENOMIC DNA]</scope>
</reference>
<reference key="6">
    <citation type="journal article" date="2004" name="Genome Res.">
        <title>The status, quality, and expansion of the NIH full-length cDNA project: the Mammalian Gene Collection (MGC).</title>
        <authorList>
            <consortium name="The MGC Project Team"/>
        </authorList>
    </citation>
    <scope>NUCLEOTIDE SEQUENCE [LARGE SCALE MRNA] (ISOFORM 1)</scope>
    <source>
        <tissue>Placenta</tissue>
    </source>
</reference>
<reference key="7">
    <citation type="journal article" date="2002" name="J. Lipid Res.">
        <title>Characterization of the lipolytic activity of endothelial lipase.</title>
        <authorList>
            <person name="McCoy M.G."/>
            <person name="Sun G.-S."/>
            <person name="Marchadier D."/>
            <person name="Maugeais C."/>
            <person name="Glick J.M."/>
            <person name="Rader D.J."/>
        </authorList>
    </citation>
    <scope>FUNCTION</scope>
    <scope>CATALYTIC ACTIVITY</scope>
    <scope>ACTIVITY REGULATION</scope>
</reference>
<reference key="8">
    <citation type="journal article" date="2005" name="J. Proteome Res.">
        <title>Human plasma N-glycoproteome analysis by immunoaffinity subtraction, hydrazide chemistry, and mass spectrometry.</title>
        <authorList>
            <person name="Liu T."/>
            <person name="Qian W.-J."/>
            <person name="Gritsenko M.A."/>
            <person name="Camp D.G. II"/>
            <person name="Monroe M.E."/>
            <person name="Moore R.J."/>
            <person name="Smith R.D."/>
        </authorList>
    </citation>
    <scope>GLYCOSYLATION [LARGE SCALE ANALYSIS] AT ASN-393</scope>
    <source>
        <tissue>Plasma</tissue>
    </source>
</reference>
<reference key="9">
    <citation type="journal article" date="2009" name="J. Biol. Chem.">
        <title>Identification of the active form of endothelial lipase, a homodimer in a head-to-tail conformation.</title>
        <authorList>
            <person name="Griffon N."/>
            <person name="Jin W."/>
            <person name="Petty T.J."/>
            <person name="Millar J."/>
            <person name="Badellino K.O."/>
            <person name="Saven J.G."/>
            <person name="Marchadier D.H."/>
            <person name="Kempner E.S."/>
            <person name="Billheimer J."/>
            <person name="Glick J.M."/>
            <person name="Rader D.J."/>
        </authorList>
    </citation>
    <scope>SUBUNIT</scope>
</reference>
<reference key="10">
    <citation type="journal article" date="2003" name="Hum. Mol. Genet.">
        <title>Association of extreme blood lipid profile phenotypic variation with 11 reverse cholesterol transport genes and 10 non-genetic cardiovascular disease risk factors.</title>
        <authorList>
            <person name="Morabia A."/>
            <person name="Cayanis E."/>
            <person name="Costanza M.C."/>
            <person name="Ross B.M."/>
            <person name="Flaherty M.S."/>
            <person name="Alvin G.B."/>
            <person name="Das K."/>
            <person name="Gilliam T.C."/>
        </authorList>
    </citation>
    <scope>VARIANTS SER-96; ILE-111 AND HIS-312</scope>
</reference>
<name>LIPG_HUMAN</name>
<dbReference type="EC" id="3.1.1.3" evidence="5 6 7"/>
<dbReference type="EC" id="3.1.1.32" evidence="7"/>
<dbReference type="EMBL" id="AF118767">
    <property type="protein sequence ID" value="AAD30434.1"/>
    <property type="molecule type" value="mRNA"/>
</dbReference>
<dbReference type="EMBL" id="AY358928">
    <property type="protein sequence ID" value="AAQ89287.1"/>
    <property type="molecule type" value="mRNA"/>
</dbReference>
<dbReference type="EMBL" id="EU332856">
    <property type="protein sequence ID" value="ABY87545.1"/>
    <property type="molecule type" value="Genomic_DNA"/>
</dbReference>
<dbReference type="EMBL" id="CH471096">
    <property type="protein sequence ID" value="EAW62947.1"/>
    <property type="molecule type" value="Genomic_DNA"/>
</dbReference>
<dbReference type="EMBL" id="BC060825">
    <property type="protein sequence ID" value="AAH60825.1"/>
    <property type="molecule type" value="mRNA"/>
</dbReference>
<dbReference type="CCDS" id="CCDS11938.1">
    <molecule id="Q9Y5X9-1"/>
</dbReference>
<dbReference type="RefSeq" id="NP_001294935.1">
    <property type="nucleotide sequence ID" value="NM_001308006.1"/>
</dbReference>
<dbReference type="RefSeq" id="NP_006024.1">
    <molecule id="Q9Y5X9-1"/>
    <property type="nucleotide sequence ID" value="NM_006033.4"/>
</dbReference>
<dbReference type="SMR" id="Q9Y5X9"/>
<dbReference type="BioGRID" id="114788">
    <property type="interactions" value="81"/>
</dbReference>
<dbReference type="FunCoup" id="Q9Y5X9">
    <property type="interactions" value="244"/>
</dbReference>
<dbReference type="IntAct" id="Q9Y5X9">
    <property type="interactions" value="63"/>
</dbReference>
<dbReference type="MINT" id="Q9Y5X9"/>
<dbReference type="STRING" id="9606.ENSP00000261292"/>
<dbReference type="BindingDB" id="Q9Y5X9"/>
<dbReference type="ChEMBL" id="CHEMBL5080"/>
<dbReference type="DrugBank" id="DB06586">
    <property type="generic name" value="Cetilistat"/>
</dbReference>
<dbReference type="DrugCentral" id="Q9Y5X9"/>
<dbReference type="GuidetoPHARMACOLOGY" id="2591"/>
<dbReference type="SwissLipids" id="SLP:000000567"/>
<dbReference type="ESTHER" id="human-LIPG">
    <property type="family name" value="Lipoprotein_Lipase"/>
</dbReference>
<dbReference type="GlyCosmos" id="Q9Y5X9">
    <property type="glycosylation" value="5 sites, No reported glycans"/>
</dbReference>
<dbReference type="GlyGen" id="Q9Y5X9">
    <property type="glycosylation" value="9 sites, 5 N-linked glycans (1 site), 1 O-linked glycan (4 sites)"/>
</dbReference>
<dbReference type="iPTMnet" id="Q9Y5X9"/>
<dbReference type="PhosphoSitePlus" id="Q9Y5X9"/>
<dbReference type="BioMuta" id="LIPG"/>
<dbReference type="DMDM" id="22001808"/>
<dbReference type="jPOST" id="Q9Y5X9"/>
<dbReference type="MassIVE" id="Q9Y5X9"/>
<dbReference type="PaxDb" id="9606-ENSP00000261292"/>
<dbReference type="PeptideAtlas" id="Q9Y5X9"/>
<dbReference type="ProteomicsDB" id="86535">
    <molecule id="Q9Y5X9-1"/>
</dbReference>
<dbReference type="ProteomicsDB" id="86536">
    <molecule id="Q9Y5X9-2"/>
</dbReference>
<dbReference type="Antibodypedia" id="1561">
    <property type="antibodies" value="1103 antibodies from 32 providers"/>
</dbReference>
<dbReference type="DNASU" id="9388"/>
<dbReference type="Ensembl" id="ENST00000261292.9">
    <molecule id="Q9Y5X9-1"/>
    <property type="protein sequence ID" value="ENSP00000261292.4"/>
    <property type="gene ID" value="ENSG00000101670.12"/>
</dbReference>
<dbReference type="Ensembl" id="ENST00000580036.5">
    <molecule id="Q9Y5X9-2"/>
    <property type="protein sequence ID" value="ENSP00000462420.1"/>
    <property type="gene ID" value="ENSG00000101670.12"/>
</dbReference>
<dbReference type="GeneID" id="9388"/>
<dbReference type="KEGG" id="hsa:9388"/>
<dbReference type="MANE-Select" id="ENST00000261292.9">
    <property type="protein sequence ID" value="ENSP00000261292.4"/>
    <property type="RefSeq nucleotide sequence ID" value="NM_006033.4"/>
    <property type="RefSeq protein sequence ID" value="NP_006024.1"/>
</dbReference>
<dbReference type="UCSC" id="uc002ldu.2">
    <molecule id="Q9Y5X9-1"/>
    <property type="organism name" value="human"/>
</dbReference>
<dbReference type="AGR" id="HGNC:6623"/>
<dbReference type="CTD" id="9388"/>
<dbReference type="DisGeNET" id="9388"/>
<dbReference type="GeneCards" id="LIPG"/>
<dbReference type="HGNC" id="HGNC:6623">
    <property type="gene designation" value="LIPG"/>
</dbReference>
<dbReference type="HPA" id="ENSG00000101670">
    <property type="expression patterns" value="Group enriched (placenta, thyroid gland)"/>
</dbReference>
<dbReference type="MalaCards" id="LIPG"/>
<dbReference type="MIM" id="603684">
    <property type="type" value="gene"/>
</dbReference>
<dbReference type="neXtProt" id="NX_Q9Y5X9"/>
<dbReference type="OpenTargets" id="ENSG00000101670"/>
<dbReference type="PharmGKB" id="PA30395"/>
<dbReference type="VEuPathDB" id="HostDB:ENSG00000101670"/>
<dbReference type="eggNOG" id="ENOG502QU8P">
    <property type="taxonomic scope" value="Eukaryota"/>
</dbReference>
<dbReference type="GeneTree" id="ENSGT00940000159394"/>
<dbReference type="HOGENOM" id="CLU_027171_1_2_1"/>
<dbReference type="InParanoid" id="Q9Y5X9"/>
<dbReference type="OMA" id="QMPVGHV"/>
<dbReference type="OrthoDB" id="199913at2759"/>
<dbReference type="PAN-GO" id="Q9Y5X9">
    <property type="GO annotations" value="5 GO annotations based on evolutionary models"/>
</dbReference>
<dbReference type="PhylomeDB" id="Q9Y5X9"/>
<dbReference type="TreeFam" id="TF324997"/>
<dbReference type="PathwayCommons" id="Q9Y5X9"/>
<dbReference type="Reactome" id="R-HSA-8964058">
    <property type="pathway name" value="HDL remodeling"/>
</dbReference>
<dbReference type="SignaLink" id="Q9Y5X9"/>
<dbReference type="BioGRID-ORCS" id="9388">
    <property type="hits" value="9 hits in 1154 CRISPR screens"/>
</dbReference>
<dbReference type="ChiTaRS" id="LIPG">
    <property type="organism name" value="human"/>
</dbReference>
<dbReference type="GenomeRNAi" id="9388"/>
<dbReference type="Pharos" id="Q9Y5X9">
    <property type="development level" value="Tchem"/>
</dbReference>
<dbReference type="PRO" id="PR:Q9Y5X9"/>
<dbReference type="Proteomes" id="UP000005640">
    <property type="component" value="Chromosome 18"/>
</dbReference>
<dbReference type="RNAct" id="Q9Y5X9">
    <property type="molecule type" value="protein"/>
</dbReference>
<dbReference type="Bgee" id="ENSG00000101670">
    <property type="expression patterns" value="Expressed in ventricular zone and 124 other cell types or tissues"/>
</dbReference>
<dbReference type="ExpressionAtlas" id="Q9Y5X9">
    <property type="expression patterns" value="baseline and differential"/>
</dbReference>
<dbReference type="GO" id="GO:0009986">
    <property type="term" value="C:cell surface"/>
    <property type="evidence" value="ECO:0000314"/>
    <property type="project" value="MGI"/>
</dbReference>
<dbReference type="GO" id="GO:0005769">
    <property type="term" value="C:early endosome"/>
    <property type="evidence" value="ECO:0000314"/>
    <property type="project" value="MGI"/>
</dbReference>
<dbReference type="GO" id="GO:0005576">
    <property type="term" value="C:extracellular region"/>
    <property type="evidence" value="ECO:0000304"/>
    <property type="project" value="Reactome"/>
</dbReference>
<dbReference type="GO" id="GO:0005615">
    <property type="term" value="C:extracellular space"/>
    <property type="evidence" value="ECO:0000314"/>
    <property type="project" value="BHF-UCL"/>
</dbReference>
<dbReference type="GO" id="GO:0005794">
    <property type="term" value="C:Golgi apparatus"/>
    <property type="evidence" value="ECO:0000314"/>
    <property type="project" value="MGI"/>
</dbReference>
<dbReference type="GO" id="GO:0008201">
    <property type="term" value="F:heparin binding"/>
    <property type="evidence" value="ECO:0007669"/>
    <property type="project" value="UniProtKB-KW"/>
</dbReference>
<dbReference type="GO" id="GO:0004465">
    <property type="term" value="F:lipoprotein lipase activity"/>
    <property type="evidence" value="ECO:0000318"/>
    <property type="project" value="GO_Central"/>
</dbReference>
<dbReference type="GO" id="GO:0008970">
    <property type="term" value="F:phospholipase A1 activity"/>
    <property type="evidence" value="ECO:0000314"/>
    <property type="project" value="UniProtKB"/>
</dbReference>
<dbReference type="GO" id="GO:0004620">
    <property type="term" value="F:phospholipase activity"/>
    <property type="evidence" value="ECO:0000314"/>
    <property type="project" value="BHF-UCL"/>
</dbReference>
<dbReference type="GO" id="GO:0004806">
    <property type="term" value="F:triacylglycerol lipase activity"/>
    <property type="evidence" value="ECO:0000314"/>
    <property type="project" value="UniProtKB"/>
</dbReference>
<dbReference type="GO" id="GO:0042632">
    <property type="term" value="P:cholesterol homeostasis"/>
    <property type="evidence" value="ECO:0000315"/>
    <property type="project" value="BHF-UCL"/>
</dbReference>
<dbReference type="GO" id="GO:0006633">
    <property type="term" value="P:fatty acid biosynthetic process"/>
    <property type="evidence" value="ECO:0000318"/>
    <property type="project" value="GO_Central"/>
</dbReference>
<dbReference type="GO" id="GO:0034375">
    <property type="term" value="P:high-density lipoprotein particle remodeling"/>
    <property type="evidence" value="ECO:0000315"/>
    <property type="project" value="BHF-UCL"/>
</dbReference>
<dbReference type="GO" id="GO:0006629">
    <property type="term" value="P:lipid metabolic process"/>
    <property type="evidence" value="ECO:0000304"/>
    <property type="project" value="ProtInc"/>
</dbReference>
<dbReference type="GO" id="GO:0009395">
    <property type="term" value="P:phospholipid catabolic process"/>
    <property type="evidence" value="ECO:0000303"/>
    <property type="project" value="BHF-UCL"/>
</dbReference>
<dbReference type="GO" id="GO:0055091">
    <property type="term" value="P:phospholipid homeostasis"/>
    <property type="evidence" value="ECO:0000315"/>
    <property type="project" value="BHF-UCL"/>
</dbReference>
<dbReference type="GO" id="GO:0032376">
    <property type="term" value="P:positive regulation of cholesterol transport"/>
    <property type="evidence" value="ECO:0000314"/>
    <property type="project" value="BHF-UCL"/>
</dbReference>
<dbReference type="GO" id="GO:0010983">
    <property type="term" value="P:positive regulation of high-density lipoprotein particle clearance"/>
    <property type="evidence" value="ECO:0000315"/>
    <property type="project" value="BHF-UCL"/>
</dbReference>
<dbReference type="GO" id="GO:0050746">
    <property type="term" value="P:regulation of lipoprotein metabolic process"/>
    <property type="evidence" value="ECO:0007669"/>
    <property type="project" value="Ensembl"/>
</dbReference>
<dbReference type="GO" id="GO:0007584">
    <property type="term" value="P:response to nutrient"/>
    <property type="evidence" value="ECO:0007669"/>
    <property type="project" value="Ensembl"/>
</dbReference>
<dbReference type="GO" id="GO:0043691">
    <property type="term" value="P:reverse cholesterol transport"/>
    <property type="evidence" value="ECO:0000315"/>
    <property type="project" value="BHF-UCL"/>
</dbReference>
<dbReference type="GO" id="GO:0019433">
    <property type="term" value="P:triglyceride catabolic process"/>
    <property type="evidence" value="ECO:0000318"/>
    <property type="project" value="GO_Central"/>
</dbReference>
<dbReference type="CDD" id="cd00707">
    <property type="entry name" value="Pancreat_lipase_like"/>
    <property type="match status" value="1"/>
</dbReference>
<dbReference type="CDD" id="cd01758">
    <property type="entry name" value="PLAT_LPL"/>
    <property type="match status" value="1"/>
</dbReference>
<dbReference type="FunFam" id="2.60.60.20:FF:000014">
    <property type="entry name" value="Endothelial lipase"/>
    <property type="match status" value="1"/>
</dbReference>
<dbReference type="FunFam" id="3.40.50.1820:FF:000109">
    <property type="entry name" value="Lipase, endothelial"/>
    <property type="match status" value="1"/>
</dbReference>
<dbReference type="Gene3D" id="3.40.50.1820">
    <property type="entry name" value="alpha/beta hydrolase"/>
    <property type="match status" value="1"/>
</dbReference>
<dbReference type="Gene3D" id="2.60.60.20">
    <property type="entry name" value="PLAT/LH2 domain"/>
    <property type="match status" value="1"/>
</dbReference>
<dbReference type="InterPro" id="IPR029058">
    <property type="entry name" value="AB_hydrolase_fold"/>
</dbReference>
<dbReference type="InterPro" id="IPR013818">
    <property type="entry name" value="Lipase"/>
</dbReference>
<dbReference type="InterPro" id="IPR016272">
    <property type="entry name" value="Lipase_LIPH"/>
</dbReference>
<dbReference type="InterPro" id="IPR033906">
    <property type="entry name" value="Lipase_N"/>
</dbReference>
<dbReference type="InterPro" id="IPR002330">
    <property type="entry name" value="Lipo_Lipase"/>
</dbReference>
<dbReference type="InterPro" id="IPR001024">
    <property type="entry name" value="PLAT/LH2_dom"/>
</dbReference>
<dbReference type="InterPro" id="IPR036392">
    <property type="entry name" value="PLAT/LH2_dom_sf"/>
</dbReference>
<dbReference type="InterPro" id="IPR000734">
    <property type="entry name" value="TAG_lipase"/>
</dbReference>
<dbReference type="PANTHER" id="PTHR11610:SF13">
    <property type="entry name" value="ENDOTHELIAL LIPASE"/>
    <property type="match status" value="1"/>
</dbReference>
<dbReference type="PANTHER" id="PTHR11610">
    <property type="entry name" value="LIPASE"/>
    <property type="match status" value="1"/>
</dbReference>
<dbReference type="Pfam" id="PF00151">
    <property type="entry name" value="Lipase"/>
    <property type="match status" value="1"/>
</dbReference>
<dbReference type="Pfam" id="PF01477">
    <property type="entry name" value="PLAT"/>
    <property type="match status" value="1"/>
</dbReference>
<dbReference type="PIRSF" id="PIRSF000865">
    <property type="entry name" value="Lipoprotein_lipase_LIPH"/>
    <property type="match status" value="1"/>
</dbReference>
<dbReference type="PRINTS" id="PR00822">
    <property type="entry name" value="LIPOLIPASE"/>
</dbReference>
<dbReference type="PRINTS" id="PR00821">
    <property type="entry name" value="TAGLIPASE"/>
</dbReference>
<dbReference type="SMART" id="SM00308">
    <property type="entry name" value="LH2"/>
    <property type="match status" value="1"/>
</dbReference>
<dbReference type="SUPFAM" id="SSF53474">
    <property type="entry name" value="alpha/beta-Hydrolases"/>
    <property type="match status" value="1"/>
</dbReference>
<dbReference type="SUPFAM" id="SSF49723">
    <property type="entry name" value="Lipase/lipooxygenase domain (PLAT/LH2 domain)"/>
    <property type="match status" value="1"/>
</dbReference>
<dbReference type="PROSITE" id="PS00120">
    <property type="entry name" value="LIPASE_SER"/>
    <property type="match status" value="1"/>
</dbReference>
<dbReference type="PROSITE" id="PS50095">
    <property type="entry name" value="PLAT"/>
    <property type="match status" value="1"/>
</dbReference>
<accession>Q9Y5X9</accession>
<accession>B0LPG6</accession>
<accession>Q6P9C8</accession>
<accession>Q6UW82</accession>
<sequence length="500" mass="56795">MSNSVPLLCFWSLCYCFAAGSPVPFGPEGRLEDKLHKPKATQTEVKPSVRFNLRTSKDPEHEGCYLSVGHSQPLEDCSFNMTAKTFFIIHGWTMSGIFENWLHKLVSALHTREKDANVVVVDWLPLAHQLYTDAVNNTRVVGHSIARMLDWLQEKDDFSLGNVHLIGYSLGAHVAGYAGNFVKGTVGRITGLDPAGPMFEGADIHKRLSPDDADFVDVLHTYTRSFGLSIGIQMPVGHIDIYPNGGDFQPGCGLNDVLGSIAYGTITEVVKCEHERAVHLFVDSLVNQDKPSFAFQCTDSNRFKKGICLSCRKNRCNSIGYNAKKMRNKRNSKMYLKTRAGMPFRVYHYQMKIHVFSYKNMGEIEPTFYVTLYGTNADSQTLPLEIVERIEQNATNTFLVYTEEDLGDLLKIQLTWEGASQSWYNLWKEFRSYLSQPRNPGRELNIRRIRVKSGETQRKLTFCTEDPENTSISPGRELWFRKCRDGWRMKNETSPTVELP</sequence>
<organism>
    <name type="scientific">Homo sapiens</name>
    <name type="common">Human</name>
    <dbReference type="NCBI Taxonomy" id="9606"/>
    <lineage>
        <taxon>Eukaryota</taxon>
        <taxon>Metazoa</taxon>
        <taxon>Chordata</taxon>
        <taxon>Craniata</taxon>
        <taxon>Vertebrata</taxon>
        <taxon>Euteleostomi</taxon>
        <taxon>Mammalia</taxon>
        <taxon>Eutheria</taxon>
        <taxon>Euarchontoglires</taxon>
        <taxon>Primates</taxon>
        <taxon>Haplorrhini</taxon>
        <taxon>Catarrhini</taxon>
        <taxon>Hominidae</taxon>
        <taxon>Homo</taxon>
    </lineage>
</organism>
<comment type="function">
    <text evidence="5 6 7">Exerts both phospholipase and triglyceride lipase activities (PubMed:10192396, PubMed:10318835, PubMed:12032167). More active as a phospholipase than a triglyceride lipase (PubMed:12032167). Hydrolyzes triglycerides, both with short-chain fatty acyl groups (tributyrin) and long-chain fatty acyl groups (triolein) with similar levels of activity toward both types of substrates (PubMed:12032167). Hydrolyzes high density lipoproteins (HDL) more efficiently than other lipoproteins (PubMed:10192396, PubMed:12032167).</text>
</comment>
<comment type="catalytic activity">
    <reaction evidence="5 6 7">
        <text>a triacylglycerol + H2O = a diacylglycerol + a fatty acid + H(+)</text>
        <dbReference type="Rhea" id="RHEA:12044"/>
        <dbReference type="ChEBI" id="CHEBI:15377"/>
        <dbReference type="ChEBI" id="CHEBI:15378"/>
        <dbReference type="ChEBI" id="CHEBI:17855"/>
        <dbReference type="ChEBI" id="CHEBI:18035"/>
        <dbReference type="ChEBI" id="CHEBI:28868"/>
        <dbReference type="EC" id="3.1.1.3"/>
    </reaction>
</comment>
<comment type="catalytic activity">
    <reaction evidence="7">
        <text>a 1,2-diacyl-sn-glycero-3-phosphocholine + H2O = a 2-acyl-sn-glycero-3-phosphocholine + a fatty acid + H(+)</text>
        <dbReference type="Rhea" id="RHEA:18689"/>
        <dbReference type="ChEBI" id="CHEBI:15377"/>
        <dbReference type="ChEBI" id="CHEBI:15378"/>
        <dbReference type="ChEBI" id="CHEBI:28868"/>
        <dbReference type="ChEBI" id="CHEBI:57643"/>
        <dbReference type="ChEBI" id="CHEBI:57875"/>
        <dbReference type="EC" id="3.1.1.32"/>
    </reaction>
</comment>
<comment type="catalytic activity">
    <reaction evidence="7">
        <text>1,2,3-tri-(9Z-octadecenoyl)-glycerol + H2O = di-(9Z)-octadecenoylglycerol + (9Z)-octadecenoate + H(+)</text>
        <dbReference type="Rhea" id="RHEA:38575"/>
        <dbReference type="ChEBI" id="CHEBI:15377"/>
        <dbReference type="ChEBI" id="CHEBI:15378"/>
        <dbReference type="ChEBI" id="CHEBI:30823"/>
        <dbReference type="ChEBI" id="CHEBI:53753"/>
        <dbReference type="ChEBI" id="CHEBI:75945"/>
    </reaction>
    <physiologicalReaction direction="left-to-right" evidence="13">
        <dbReference type="Rhea" id="RHEA:38576"/>
    </physiologicalReaction>
</comment>
<comment type="catalytic activity">
    <reaction evidence="7">
        <text>1,2,3-tributanoylglycerol + H2O = dibutanoylglycerol + butanoate + H(+)</text>
        <dbReference type="Rhea" id="RHEA:40475"/>
        <dbReference type="ChEBI" id="CHEBI:15377"/>
        <dbReference type="ChEBI" id="CHEBI:15378"/>
        <dbReference type="ChEBI" id="CHEBI:17968"/>
        <dbReference type="ChEBI" id="CHEBI:35020"/>
        <dbReference type="ChEBI" id="CHEBI:76478"/>
    </reaction>
    <physiologicalReaction direction="left-to-right" evidence="13">
        <dbReference type="Rhea" id="RHEA:40476"/>
    </physiologicalReaction>
</comment>
<comment type="catalytic activity">
    <reaction evidence="7">
        <text>1,2-dihexadecanoyl-sn-glycero-3-phosphocholine + H2O = hexadecanoyl-sn-glycero-3-phosphocholine + hexadecanoate + H(+)</text>
        <dbReference type="Rhea" id="RHEA:41384"/>
        <dbReference type="ChEBI" id="CHEBI:7896"/>
        <dbReference type="ChEBI" id="CHEBI:15377"/>
        <dbReference type="ChEBI" id="CHEBI:15378"/>
        <dbReference type="ChEBI" id="CHEBI:64563"/>
        <dbReference type="ChEBI" id="CHEBI:72999"/>
    </reaction>
    <physiologicalReaction direction="left-to-right" evidence="13">
        <dbReference type="Rhea" id="RHEA:41385"/>
    </physiologicalReaction>
</comment>
<comment type="activity regulation">
    <text evidence="7">Inhibited by serum and NaCl.</text>
</comment>
<comment type="subunit">
    <text evidence="10">Head to tail homodimer.</text>
</comment>
<comment type="subcellular location">
    <subcellularLocation>
        <location evidence="6">Secreted</location>
    </subcellularLocation>
</comment>
<comment type="alternative products">
    <event type="alternative splicing"/>
    <isoform>
        <id>Q9Y5X9-1</id>
        <name>1</name>
        <sequence type="displayed"/>
    </isoform>
    <isoform>
        <id>Q9Y5X9-2</id>
        <name>2</name>
        <sequence type="described" ref="VSP_013302 VSP_013303"/>
    </isoform>
</comment>
<comment type="tissue specificity">
    <text evidence="5 6">High level of expression in the liver, placenta, lung, thyroid, kidney, testis and in the corpus luteum of the ovary. Expressed also in coronary artery endothelial cells, umbilical vein endothelial cells and in hepatocytes and osteosarcoma cell lines. Not detected in heart, brain and muscle.</text>
</comment>
<comment type="miscellaneous">
    <text>It is termed endothelial lipase due to the fact that it is synthesized in endothelial cells, a characteristic that distinguishes it from other members of the family. However, this protein is also expressed in other cell types.</text>
</comment>
<comment type="similarity">
    <text evidence="12">Belongs to the AB hydrolase superfamily. Lipase family.</text>
</comment>
<gene>
    <name type="primary">LIPG</name>
    <name type="ORF">UNQ387/PRO719</name>
</gene>
<proteinExistence type="evidence at protein level"/>
<keyword id="KW-0025">Alternative splicing</keyword>
<keyword id="KW-1015">Disulfide bond</keyword>
<keyword id="KW-0325">Glycoprotein</keyword>
<keyword id="KW-0358">Heparin-binding</keyword>
<keyword id="KW-0378">Hydrolase</keyword>
<keyword id="KW-0442">Lipid degradation</keyword>
<keyword id="KW-0443">Lipid metabolism</keyword>
<keyword id="KW-1267">Proteomics identification</keyword>
<keyword id="KW-1185">Reference proteome</keyword>
<keyword id="KW-0964">Secreted</keyword>
<keyword id="KW-0732">Signal</keyword>
<evidence type="ECO:0000250" key="1"/>
<evidence type="ECO:0000255" key="2"/>
<evidence type="ECO:0000255" key="3">
    <source>
        <dbReference type="PROSITE-ProRule" id="PRU00152"/>
    </source>
</evidence>
<evidence type="ECO:0000255" key="4">
    <source>
        <dbReference type="PROSITE-ProRule" id="PRU10037"/>
    </source>
</evidence>
<evidence type="ECO:0000269" key="5">
    <source>
    </source>
</evidence>
<evidence type="ECO:0000269" key="6">
    <source>
    </source>
</evidence>
<evidence type="ECO:0000269" key="7">
    <source>
    </source>
</evidence>
<evidence type="ECO:0000269" key="8">
    <source>
    </source>
</evidence>
<evidence type="ECO:0000269" key="9">
    <source>
    </source>
</evidence>
<evidence type="ECO:0000269" key="10">
    <source>
    </source>
</evidence>
<evidence type="ECO:0000303" key="11">
    <source>
    </source>
</evidence>
<evidence type="ECO:0000305" key="12"/>
<evidence type="ECO:0000305" key="13">
    <source>
    </source>
</evidence>